<proteinExistence type="evidence at protein level"/>
<name>YRFJ_ECOLI</name>
<dbReference type="EMBL" id="U00096">
    <property type="protein sequence ID" value="UMR55117.1"/>
    <property type="molecule type" value="Genomic_DNA"/>
</dbReference>
<dbReference type="InParanoid" id="P0DV19"/>
<dbReference type="BioCyc" id="EcoCyc:MONOMER0-4548"/>
<dbReference type="Proteomes" id="UP000000625">
    <property type="component" value="Chromosome"/>
</dbReference>
<evidence type="ECO:0000269" key="1">
    <source>
    </source>
</evidence>
<evidence type="ECO:0000303" key="2">
    <source>
    </source>
</evidence>
<evidence type="ECO:0000312" key="3">
    <source>
        <dbReference type="EMBL" id="UMR55117.1"/>
    </source>
</evidence>
<gene>
    <name evidence="2" type="primary">yrfJ</name>
    <name evidence="3" type="ordered locus">b4820</name>
</gene>
<protein>
    <recommendedName>
        <fullName evidence="2">Protein YrfJ</fullName>
    </recommendedName>
</protein>
<sequence>MRWQLNKQQLHARLSMK</sequence>
<keyword id="KW-1185">Reference proteome</keyword>
<organism>
    <name type="scientific">Escherichia coli (strain K12)</name>
    <dbReference type="NCBI Taxonomy" id="83333"/>
    <lineage>
        <taxon>Bacteria</taxon>
        <taxon>Pseudomonadati</taxon>
        <taxon>Pseudomonadota</taxon>
        <taxon>Gammaproteobacteria</taxon>
        <taxon>Enterobacterales</taxon>
        <taxon>Enterobacteriaceae</taxon>
        <taxon>Escherichia</taxon>
    </lineage>
</organism>
<reference key="1">
    <citation type="journal article" date="1997" name="Science">
        <title>The complete genome sequence of Escherichia coli K-12.</title>
        <authorList>
            <person name="Blattner F.R."/>
            <person name="Plunkett G. III"/>
            <person name="Bloch C.A."/>
            <person name="Perna N.T."/>
            <person name="Burland V."/>
            <person name="Riley M."/>
            <person name="Collado-Vides J."/>
            <person name="Glasner J.D."/>
            <person name="Rode C.K."/>
            <person name="Mayhew G.F."/>
            <person name="Gregor J."/>
            <person name="Davis N.W."/>
            <person name="Kirkpatrick H.A."/>
            <person name="Goeden M.A."/>
            <person name="Rose D.J."/>
            <person name="Mau B."/>
            <person name="Shao Y."/>
        </authorList>
    </citation>
    <scope>NUCLEOTIDE SEQUENCE [LARGE SCALE GENOMIC DNA]</scope>
    <source>
        <strain>K12 / MG1655 / ATCC 47076</strain>
    </source>
</reference>
<reference key="2">
    <citation type="journal article" date="2022" name="J. Bacteriol.">
        <title>Identification of novel translated small ORFs in Escherichia coli using complementary ribosome profiling approaches.</title>
        <authorList>
            <person name="Stringer A."/>
            <person name="Smith C."/>
            <person name="Mangano K."/>
            <person name="Wade J.T."/>
        </authorList>
    </citation>
    <scope>IDENTIFICATION</scope>
    <source>
        <strain>K12 / MG1655 / ATCC 47076</strain>
    </source>
</reference>
<accession>P0DV19</accession>
<comment type="induction">
    <text evidence="1">Identified when cells are grown in rich medium (at protein level).</text>
</comment>
<comment type="miscellaneous">
    <text evidence="1">Overlaps downstream argD.</text>
</comment>
<feature type="chain" id="PRO_0000454740" description="Protein YrfJ">
    <location>
        <begin position="1"/>
        <end position="17"/>
    </location>
</feature>